<accession>Q2K9J3</accession>
<reference key="1">
    <citation type="journal article" date="2006" name="Proc. Natl. Acad. Sci. U.S.A.">
        <title>The partitioned Rhizobium etli genome: genetic and metabolic redundancy in seven interacting replicons.</title>
        <authorList>
            <person name="Gonzalez V."/>
            <person name="Santamaria R.I."/>
            <person name="Bustos P."/>
            <person name="Hernandez-Gonzalez I."/>
            <person name="Medrano-Soto A."/>
            <person name="Moreno-Hagelsieb G."/>
            <person name="Janga S.C."/>
            <person name="Ramirez M.A."/>
            <person name="Jimenez-Jacinto V."/>
            <person name="Collado-Vides J."/>
            <person name="Davila G."/>
        </authorList>
    </citation>
    <scope>NUCLEOTIDE SEQUENCE [LARGE SCALE GENOMIC DNA]</scope>
    <source>
        <strain>ATCC 51251 / DSM 11541 / JCM 21823 / NBRC 15573 / CFN 42</strain>
    </source>
</reference>
<gene>
    <name evidence="1" type="primary">rpsK</name>
    <name type="ordered locus">RHE_CH01698</name>
</gene>
<feature type="chain" id="PRO_0000294833" description="Small ribosomal subunit protein uS11">
    <location>
        <begin position="1"/>
        <end position="129"/>
    </location>
</feature>
<dbReference type="EMBL" id="CP000133">
    <property type="protein sequence ID" value="ABC90493.1"/>
    <property type="molecule type" value="Genomic_DNA"/>
</dbReference>
<dbReference type="RefSeq" id="WP_003547577.1">
    <property type="nucleotide sequence ID" value="NC_007761.1"/>
</dbReference>
<dbReference type="SMR" id="Q2K9J3"/>
<dbReference type="GeneID" id="91148151"/>
<dbReference type="KEGG" id="ret:RHE_CH01698"/>
<dbReference type="eggNOG" id="COG0100">
    <property type="taxonomic scope" value="Bacteria"/>
</dbReference>
<dbReference type="HOGENOM" id="CLU_072439_5_0_5"/>
<dbReference type="OrthoDB" id="9806415at2"/>
<dbReference type="Proteomes" id="UP000001936">
    <property type="component" value="Chromosome"/>
</dbReference>
<dbReference type="GO" id="GO:1990904">
    <property type="term" value="C:ribonucleoprotein complex"/>
    <property type="evidence" value="ECO:0007669"/>
    <property type="project" value="UniProtKB-KW"/>
</dbReference>
<dbReference type="GO" id="GO:0005840">
    <property type="term" value="C:ribosome"/>
    <property type="evidence" value="ECO:0007669"/>
    <property type="project" value="UniProtKB-KW"/>
</dbReference>
<dbReference type="GO" id="GO:0019843">
    <property type="term" value="F:rRNA binding"/>
    <property type="evidence" value="ECO:0007669"/>
    <property type="project" value="UniProtKB-UniRule"/>
</dbReference>
<dbReference type="GO" id="GO:0003735">
    <property type="term" value="F:structural constituent of ribosome"/>
    <property type="evidence" value="ECO:0007669"/>
    <property type="project" value="InterPro"/>
</dbReference>
<dbReference type="GO" id="GO:0006412">
    <property type="term" value="P:translation"/>
    <property type="evidence" value="ECO:0007669"/>
    <property type="project" value="UniProtKB-UniRule"/>
</dbReference>
<dbReference type="FunFam" id="3.30.420.80:FF:000001">
    <property type="entry name" value="30S ribosomal protein S11"/>
    <property type="match status" value="1"/>
</dbReference>
<dbReference type="Gene3D" id="3.30.420.80">
    <property type="entry name" value="Ribosomal protein S11"/>
    <property type="match status" value="1"/>
</dbReference>
<dbReference type="HAMAP" id="MF_01310">
    <property type="entry name" value="Ribosomal_uS11"/>
    <property type="match status" value="1"/>
</dbReference>
<dbReference type="InterPro" id="IPR001971">
    <property type="entry name" value="Ribosomal_uS11"/>
</dbReference>
<dbReference type="InterPro" id="IPR019981">
    <property type="entry name" value="Ribosomal_uS11_bac-type"/>
</dbReference>
<dbReference type="InterPro" id="IPR018102">
    <property type="entry name" value="Ribosomal_uS11_CS"/>
</dbReference>
<dbReference type="InterPro" id="IPR036967">
    <property type="entry name" value="Ribosomal_uS11_sf"/>
</dbReference>
<dbReference type="NCBIfam" id="NF003698">
    <property type="entry name" value="PRK05309.1"/>
    <property type="match status" value="1"/>
</dbReference>
<dbReference type="NCBIfam" id="TIGR03632">
    <property type="entry name" value="uS11_bact"/>
    <property type="match status" value="1"/>
</dbReference>
<dbReference type="PANTHER" id="PTHR11759">
    <property type="entry name" value="40S RIBOSOMAL PROTEIN S14/30S RIBOSOMAL PROTEIN S11"/>
    <property type="match status" value="1"/>
</dbReference>
<dbReference type="Pfam" id="PF00411">
    <property type="entry name" value="Ribosomal_S11"/>
    <property type="match status" value="1"/>
</dbReference>
<dbReference type="PIRSF" id="PIRSF002131">
    <property type="entry name" value="Ribosomal_S11"/>
    <property type="match status" value="1"/>
</dbReference>
<dbReference type="SUPFAM" id="SSF53137">
    <property type="entry name" value="Translational machinery components"/>
    <property type="match status" value="1"/>
</dbReference>
<dbReference type="PROSITE" id="PS00054">
    <property type="entry name" value="RIBOSOMAL_S11"/>
    <property type="match status" value="1"/>
</dbReference>
<protein>
    <recommendedName>
        <fullName evidence="1">Small ribosomal subunit protein uS11</fullName>
    </recommendedName>
    <alternativeName>
        <fullName evidence="2">30S ribosomal protein S11</fullName>
    </alternativeName>
</protein>
<evidence type="ECO:0000255" key="1">
    <source>
        <dbReference type="HAMAP-Rule" id="MF_01310"/>
    </source>
</evidence>
<evidence type="ECO:0000305" key="2"/>
<comment type="function">
    <text evidence="1">Located on the platform of the 30S subunit, it bridges several disparate RNA helices of the 16S rRNA. Forms part of the Shine-Dalgarno cleft in the 70S ribosome.</text>
</comment>
<comment type="subunit">
    <text evidence="1">Part of the 30S ribosomal subunit. Interacts with proteins S7 and S18. Binds to IF-3.</text>
</comment>
<comment type="similarity">
    <text evidence="1">Belongs to the universal ribosomal protein uS11 family.</text>
</comment>
<proteinExistence type="inferred from homology"/>
<keyword id="KW-1185">Reference proteome</keyword>
<keyword id="KW-0687">Ribonucleoprotein</keyword>
<keyword id="KW-0689">Ribosomal protein</keyword>
<keyword id="KW-0694">RNA-binding</keyword>
<keyword id="KW-0699">rRNA-binding</keyword>
<sequence length="129" mass="13893">MAKEAVRVRRRERKNISSGVAHVNSTFNNTMITITDAQGNAIAWSSAGAKGFKGSRKSTPFAAQIAAEDCAKKAQEHGMKSLEVEVCGPGSGRESALRALQAAGFMITSIRDVTPIPHNGCRPRKKRRV</sequence>
<name>RS11_RHIEC</name>
<organism>
    <name type="scientific">Rhizobium etli (strain ATCC 51251 / DSM 11541 / JCM 21823 / NBRC 15573 / CFN 42)</name>
    <dbReference type="NCBI Taxonomy" id="347834"/>
    <lineage>
        <taxon>Bacteria</taxon>
        <taxon>Pseudomonadati</taxon>
        <taxon>Pseudomonadota</taxon>
        <taxon>Alphaproteobacteria</taxon>
        <taxon>Hyphomicrobiales</taxon>
        <taxon>Rhizobiaceae</taxon>
        <taxon>Rhizobium/Agrobacterium group</taxon>
        <taxon>Rhizobium</taxon>
    </lineage>
</organism>